<gene>
    <name evidence="1" type="primary">Tex55</name>
    <name evidence="4" type="synonym">Tscpa</name>
</gene>
<keyword id="KW-0539">Nucleus</keyword>
<keyword id="KW-1185">Reference proteome</keyword>
<evidence type="ECO:0000250" key="1">
    <source>
        <dbReference type="UniProtKB" id="Q96M34"/>
    </source>
</evidence>
<evidence type="ECO:0000256" key="2">
    <source>
        <dbReference type="SAM" id="MobiDB-lite"/>
    </source>
</evidence>
<evidence type="ECO:0000269" key="3">
    <source>
    </source>
</evidence>
<evidence type="ECO:0000303" key="4">
    <source>
    </source>
</evidence>
<evidence type="ECO:0000305" key="5"/>
<accession>A6X8Z9</accession>
<accession>A4QMY3</accession>
<accession>Q8C5T0</accession>
<organism>
    <name type="scientific">Mus musculus</name>
    <name type="common">Mouse</name>
    <dbReference type="NCBI Taxonomy" id="10090"/>
    <lineage>
        <taxon>Eukaryota</taxon>
        <taxon>Metazoa</taxon>
        <taxon>Chordata</taxon>
        <taxon>Craniata</taxon>
        <taxon>Vertebrata</taxon>
        <taxon>Euteleostomi</taxon>
        <taxon>Mammalia</taxon>
        <taxon>Eutheria</taxon>
        <taxon>Euarchontoglires</taxon>
        <taxon>Glires</taxon>
        <taxon>Rodentia</taxon>
        <taxon>Myomorpha</taxon>
        <taxon>Muroidea</taxon>
        <taxon>Muridae</taxon>
        <taxon>Murinae</taxon>
        <taxon>Mus</taxon>
        <taxon>Mus</taxon>
    </lineage>
</organism>
<proteinExistence type="evidence at transcript level"/>
<sequence length="381" mass="43579">MDEPPDESLNHENTTRAPDNEKNNIEGAGQALHRGSEHAGVGSSEPTGDKVSGQANAGSRQTGRRTSEEAEQRSSQPTEHRLPGHAERRASQQAERRLSERRTSQPPNQQLPSHSERKTSGKIDGQESLLSEQTDQETSEFDDLIPSASTDYLSARSQQQEYNQHGYWTEDSSDPHRLSEDLEKDYTRVKHITEKQAGYRSYYKTLAHIESRTLTDTNDYRETGQRLQPCTFEDSEAELPSKVSTTEETESATTIQAYNTQDTELTTSTSHEKLPSITTKVYYSSSPEKIQTTEYTSDTTPVFDQGRSSQRSSQSSRWRFPPIVFEDPYHVALRYVEKHNILHIFQQITENLVYERPDDPLYFMLDQVQNMIKHRDERQSD</sequence>
<protein>
    <recommendedName>
        <fullName evidence="1">Testis-specific expressed protein 55</fullName>
    </recommendedName>
    <alternativeName>
        <fullName evidence="4">Testis-specific conserved, cAMP-dependent type II PK-anchoring protein</fullName>
    </alternativeName>
</protein>
<reference key="1">
    <citation type="journal article" date="2005" name="Science">
        <title>The transcriptional landscape of the mammalian genome.</title>
        <authorList>
            <person name="Carninci P."/>
            <person name="Kasukawa T."/>
            <person name="Katayama S."/>
            <person name="Gough J."/>
            <person name="Frith M.C."/>
            <person name="Maeda N."/>
            <person name="Oyama R."/>
            <person name="Ravasi T."/>
            <person name="Lenhard B."/>
            <person name="Wells C."/>
            <person name="Kodzius R."/>
            <person name="Shimokawa K."/>
            <person name="Bajic V.B."/>
            <person name="Brenner S.E."/>
            <person name="Batalov S."/>
            <person name="Forrest A.R."/>
            <person name="Zavolan M."/>
            <person name="Davis M.J."/>
            <person name="Wilming L.G."/>
            <person name="Aidinis V."/>
            <person name="Allen J.E."/>
            <person name="Ambesi-Impiombato A."/>
            <person name="Apweiler R."/>
            <person name="Aturaliya R.N."/>
            <person name="Bailey T.L."/>
            <person name="Bansal M."/>
            <person name="Baxter L."/>
            <person name="Beisel K.W."/>
            <person name="Bersano T."/>
            <person name="Bono H."/>
            <person name="Chalk A.M."/>
            <person name="Chiu K.P."/>
            <person name="Choudhary V."/>
            <person name="Christoffels A."/>
            <person name="Clutterbuck D.R."/>
            <person name="Crowe M.L."/>
            <person name="Dalla E."/>
            <person name="Dalrymple B.P."/>
            <person name="de Bono B."/>
            <person name="Della Gatta G."/>
            <person name="di Bernardo D."/>
            <person name="Down T."/>
            <person name="Engstrom P."/>
            <person name="Fagiolini M."/>
            <person name="Faulkner G."/>
            <person name="Fletcher C.F."/>
            <person name="Fukushima T."/>
            <person name="Furuno M."/>
            <person name="Futaki S."/>
            <person name="Gariboldi M."/>
            <person name="Georgii-Hemming P."/>
            <person name="Gingeras T.R."/>
            <person name="Gojobori T."/>
            <person name="Green R.E."/>
            <person name="Gustincich S."/>
            <person name="Harbers M."/>
            <person name="Hayashi Y."/>
            <person name="Hensch T.K."/>
            <person name="Hirokawa N."/>
            <person name="Hill D."/>
            <person name="Huminiecki L."/>
            <person name="Iacono M."/>
            <person name="Ikeo K."/>
            <person name="Iwama A."/>
            <person name="Ishikawa T."/>
            <person name="Jakt M."/>
            <person name="Kanapin A."/>
            <person name="Katoh M."/>
            <person name="Kawasawa Y."/>
            <person name="Kelso J."/>
            <person name="Kitamura H."/>
            <person name="Kitano H."/>
            <person name="Kollias G."/>
            <person name="Krishnan S.P."/>
            <person name="Kruger A."/>
            <person name="Kummerfeld S.K."/>
            <person name="Kurochkin I.V."/>
            <person name="Lareau L.F."/>
            <person name="Lazarevic D."/>
            <person name="Lipovich L."/>
            <person name="Liu J."/>
            <person name="Liuni S."/>
            <person name="McWilliam S."/>
            <person name="Madan Babu M."/>
            <person name="Madera M."/>
            <person name="Marchionni L."/>
            <person name="Matsuda H."/>
            <person name="Matsuzawa S."/>
            <person name="Miki H."/>
            <person name="Mignone F."/>
            <person name="Miyake S."/>
            <person name="Morris K."/>
            <person name="Mottagui-Tabar S."/>
            <person name="Mulder N."/>
            <person name="Nakano N."/>
            <person name="Nakauchi H."/>
            <person name="Ng P."/>
            <person name="Nilsson R."/>
            <person name="Nishiguchi S."/>
            <person name="Nishikawa S."/>
            <person name="Nori F."/>
            <person name="Ohara O."/>
            <person name="Okazaki Y."/>
            <person name="Orlando V."/>
            <person name="Pang K.C."/>
            <person name="Pavan W.J."/>
            <person name="Pavesi G."/>
            <person name="Pesole G."/>
            <person name="Petrovsky N."/>
            <person name="Piazza S."/>
            <person name="Reed J."/>
            <person name="Reid J.F."/>
            <person name="Ring B.Z."/>
            <person name="Ringwald M."/>
            <person name="Rost B."/>
            <person name="Ruan Y."/>
            <person name="Salzberg S.L."/>
            <person name="Sandelin A."/>
            <person name="Schneider C."/>
            <person name="Schoenbach C."/>
            <person name="Sekiguchi K."/>
            <person name="Semple C.A."/>
            <person name="Seno S."/>
            <person name="Sessa L."/>
            <person name="Sheng Y."/>
            <person name="Shibata Y."/>
            <person name="Shimada H."/>
            <person name="Shimada K."/>
            <person name="Silva D."/>
            <person name="Sinclair B."/>
            <person name="Sperling S."/>
            <person name="Stupka E."/>
            <person name="Sugiura K."/>
            <person name="Sultana R."/>
            <person name="Takenaka Y."/>
            <person name="Taki K."/>
            <person name="Tammoja K."/>
            <person name="Tan S.L."/>
            <person name="Tang S."/>
            <person name="Taylor M.S."/>
            <person name="Tegner J."/>
            <person name="Teichmann S.A."/>
            <person name="Ueda H.R."/>
            <person name="van Nimwegen E."/>
            <person name="Verardo R."/>
            <person name="Wei C.L."/>
            <person name="Yagi K."/>
            <person name="Yamanishi H."/>
            <person name="Zabarovsky E."/>
            <person name="Zhu S."/>
            <person name="Zimmer A."/>
            <person name="Hide W."/>
            <person name="Bult C."/>
            <person name="Grimmond S.M."/>
            <person name="Teasdale R.D."/>
            <person name="Liu E.T."/>
            <person name="Brusic V."/>
            <person name="Quackenbush J."/>
            <person name="Wahlestedt C."/>
            <person name="Mattick J.S."/>
            <person name="Hume D.A."/>
            <person name="Kai C."/>
            <person name="Sasaki D."/>
            <person name="Tomaru Y."/>
            <person name="Fukuda S."/>
            <person name="Kanamori-Katayama M."/>
            <person name="Suzuki M."/>
            <person name="Aoki J."/>
            <person name="Arakawa T."/>
            <person name="Iida J."/>
            <person name="Imamura K."/>
            <person name="Itoh M."/>
            <person name="Kato T."/>
            <person name="Kawaji H."/>
            <person name="Kawagashira N."/>
            <person name="Kawashima T."/>
            <person name="Kojima M."/>
            <person name="Kondo S."/>
            <person name="Konno H."/>
            <person name="Nakano K."/>
            <person name="Ninomiya N."/>
            <person name="Nishio T."/>
            <person name="Okada M."/>
            <person name="Plessy C."/>
            <person name="Shibata K."/>
            <person name="Shiraki T."/>
            <person name="Suzuki S."/>
            <person name="Tagami M."/>
            <person name="Waki K."/>
            <person name="Watahiki A."/>
            <person name="Okamura-Oho Y."/>
            <person name="Suzuki H."/>
            <person name="Kawai J."/>
            <person name="Hayashizaki Y."/>
        </authorList>
    </citation>
    <scope>NUCLEOTIDE SEQUENCE [LARGE SCALE MRNA]</scope>
    <source>
        <strain>C57BL/6J</strain>
        <tissue>Testis</tissue>
    </source>
</reference>
<reference key="2">
    <citation type="journal article" date="2009" name="PLoS Biol.">
        <title>Lineage-specific biology revealed by a finished genome assembly of the mouse.</title>
        <authorList>
            <person name="Church D.M."/>
            <person name="Goodstadt L."/>
            <person name="Hillier L.W."/>
            <person name="Zody M.C."/>
            <person name="Goldstein S."/>
            <person name="She X."/>
            <person name="Bult C.J."/>
            <person name="Agarwala R."/>
            <person name="Cherry J.L."/>
            <person name="DiCuccio M."/>
            <person name="Hlavina W."/>
            <person name="Kapustin Y."/>
            <person name="Meric P."/>
            <person name="Maglott D."/>
            <person name="Birtle Z."/>
            <person name="Marques A.C."/>
            <person name="Graves T."/>
            <person name="Zhou S."/>
            <person name="Teague B."/>
            <person name="Potamousis K."/>
            <person name="Churas C."/>
            <person name="Place M."/>
            <person name="Herschleb J."/>
            <person name="Runnheim R."/>
            <person name="Forrest D."/>
            <person name="Amos-Landgraf J."/>
            <person name="Schwartz D.C."/>
            <person name="Cheng Z."/>
            <person name="Lindblad-Toh K."/>
            <person name="Eichler E.E."/>
            <person name="Ponting C.P."/>
        </authorList>
    </citation>
    <scope>NUCLEOTIDE SEQUENCE [LARGE SCALE GENOMIC DNA]</scope>
    <source>
        <strain>C57BL/6J</strain>
    </source>
</reference>
<reference key="3">
    <citation type="submission" date="2005-07" db="EMBL/GenBank/DDBJ databases">
        <authorList>
            <person name="Mural R.J."/>
            <person name="Adams M.D."/>
            <person name="Myers E.W."/>
            <person name="Smith H.O."/>
            <person name="Venter J.C."/>
        </authorList>
    </citation>
    <scope>NUCLEOTIDE SEQUENCE [LARGE SCALE GENOMIC DNA]</scope>
</reference>
<reference key="4">
    <citation type="journal article" date="2004" name="Genome Res.">
        <title>The status, quality, and expansion of the NIH full-length cDNA project: the Mammalian Gene Collection (MGC).</title>
        <authorList>
            <consortium name="The MGC Project Team"/>
        </authorList>
    </citation>
    <scope>NUCLEOTIDE SEQUENCE [LARGE SCALE MRNA]</scope>
</reference>
<reference key="5">
    <citation type="journal article" date="2009" name="J. Huazhong Univ. Sci. Technol. Med. Sci.">
        <title>Expression profile of a novel germ cell-specific gene, TSCPA, in mice and human.</title>
        <authorList>
            <person name="Yu Z."/>
            <person name="Wu B."/>
            <person name="Tang A."/>
            <person name="Chen J."/>
            <person name="Guo X."/>
            <person name="Qin J."/>
            <person name="Gui Y."/>
            <person name="Cai Z."/>
        </authorList>
    </citation>
    <scope>SUBCELLULAR LOCATION</scope>
    <scope>TISSUE SPECIFICITY</scope>
</reference>
<comment type="subcellular location">
    <subcellularLocation>
        <location evidence="3">Nucleus</location>
    </subcellularLocation>
</comment>
<comment type="tissue specificity">
    <text evidence="3">Testis-specific.</text>
</comment>
<feature type="chain" id="PRO_0000446513" description="Testis-specific expressed protein 55">
    <location>
        <begin position="1"/>
        <end position="381"/>
    </location>
</feature>
<feature type="region of interest" description="Disordered" evidence="2">
    <location>
        <begin position="1"/>
        <end position="176"/>
    </location>
</feature>
<feature type="region of interest" description="Disordered" evidence="2">
    <location>
        <begin position="292"/>
        <end position="317"/>
    </location>
</feature>
<feature type="compositionally biased region" description="Basic and acidic residues" evidence="2">
    <location>
        <begin position="8"/>
        <end position="24"/>
    </location>
</feature>
<feature type="compositionally biased region" description="Basic and acidic residues" evidence="2">
    <location>
        <begin position="65"/>
        <end position="103"/>
    </location>
</feature>
<feature type="compositionally biased region" description="Polar residues" evidence="2">
    <location>
        <begin position="104"/>
        <end position="113"/>
    </location>
</feature>
<feature type="compositionally biased region" description="Basic and acidic residues" evidence="2">
    <location>
        <begin position="114"/>
        <end position="125"/>
    </location>
</feature>
<feature type="compositionally biased region" description="Acidic residues" evidence="2">
    <location>
        <begin position="134"/>
        <end position="143"/>
    </location>
</feature>
<feature type="compositionally biased region" description="Polar residues" evidence="2">
    <location>
        <begin position="147"/>
        <end position="163"/>
    </location>
</feature>
<feature type="compositionally biased region" description="Polar residues" evidence="2">
    <location>
        <begin position="292"/>
        <end position="302"/>
    </location>
</feature>
<feature type="compositionally biased region" description="Low complexity" evidence="2">
    <location>
        <begin position="307"/>
        <end position="317"/>
    </location>
</feature>
<feature type="sequence conflict" description="In Ref. 3; EDK97996 and 4; AAI15689." evidence="5" ref="3 4">
    <original>T</original>
    <variation>S</variation>
    <location>
        <position position="134"/>
    </location>
</feature>
<feature type="sequence conflict" description="In Ref. 3; EDK97996 and 4; AAI15689." evidence="5" ref="3 4">
    <original>T</original>
    <variation>S</variation>
    <location>
        <position position="187"/>
    </location>
</feature>
<name>TEX55_MOUSE</name>
<dbReference type="EMBL" id="AK077164">
    <property type="protein sequence ID" value="BAC36654.1"/>
    <property type="molecule type" value="mRNA"/>
</dbReference>
<dbReference type="EMBL" id="CT009576">
    <property type="status" value="NOT_ANNOTATED_CDS"/>
    <property type="molecule type" value="Genomic_DNA"/>
</dbReference>
<dbReference type="EMBL" id="CH466521">
    <property type="protein sequence ID" value="EDK97996.1"/>
    <property type="molecule type" value="Genomic_DNA"/>
</dbReference>
<dbReference type="EMBL" id="BC115688">
    <property type="protein sequence ID" value="AAI15689.1"/>
    <property type="molecule type" value="mRNA"/>
</dbReference>
<dbReference type="CCDS" id="CCDS49850.1"/>
<dbReference type="RefSeq" id="NP_083318.1">
    <property type="nucleotide sequence ID" value="NM_029042.2"/>
</dbReference>
<dbReference type="SMR" id="A6X8Z9"/>
<dbReference type="FunCoup" id="A6X8Z9">
    <property type="interactions" value="36"/>
</dbReference>
<dbReference type="STRING" id="10090.ENSMUSP00000113120"/>
<dbReference type="iPTMnet" id="A6X8Z9"/>
<dbReference type="PhosphoSitePlus" id="A6X8Z9"/>
<dbReference type="PaxDb" id="10090-ENSMUSP00000113120"/>
<dbReference type="ProteomicsDB" id="346922"/>
<dbReference type="Ensembl" id="ENSMUST00000122078.3">
    <property type="protein sequence ID" value="ENSMUSP00000113120.2"/>
    <property type="gene ID" value="ENSMUSG00000022798.9"/>
</dbReference>
<dbReference type="GeneID" id="74663"/>
<dbReference type="KEGG" id="mmu:74663"/>
<dbReference type="UCSC" id="uc007zfn.1">
    <property type="organism name" value="mouse"/>
</dbReference>
<dbReference type="AGR" id="MGI:1921913"/>
<dbReference type="CTD" id="152405"/>
<dbReference type="MGI" id="MGI:1921913">
    <property type="gene designation" value="Tex55"/>
</dbReference>
<dbReference type="VEuPathDB" id="HostDB:ENSMUSG00000022798"/>
<dbReference type="eggNOG" id="ENOG502SEVH">
    <property type="taxonomic scope" value="Eukaryota"/>
</dbReference>
<dbReference type="GeneTree" id="ENSGT00940000154487"/>
<dbReference type="HOGENOM" id="CLU_034619_0_0_1"/>
<dbReference type="InParanoid" id="A6X8Z9"/>
<dbReference type="OMA" id="QPCKFEP"/>
<dbReference type="OrthoDB" id="522106at2759"/>
<dbReference type="TreeFam" id="TF328421"/>
<dbReference type="BioGRID-ORCS" id="74663">
    <property type="hits" value="0 hits in 77 CRISPR screens"/>
</dbReference>
<dbReference type="ChiTaRS" id="Tex55">
    <property type="organism name" value="mouse"/>
</dbReference>
<dbReference type="PRO" id="PR:A6X8Z9"/>
<dbReference type="Proteomes" id="UP000000589">
    <property type="component" value="Chromosome 16"/>
</dbReference>
<dbReference type="RNAct" id="A6X8Z9">
    <property type="molecule type" value="protein"/>
</dbReference>
<dbReference type="Bgee" id="ENSMUSG00000022798">
    <property type="expression patterns" value="Expressed in seminiferous tubule of testis and 4 other cell types or tissues"/>
</dbReference>
<dbReference type="GO" id="GO:0005634">
    <property type="term" value="C:nucleus"/>
    <property type="evidence" value="ECO:0000314"/>
    <property type="project" value="UniProtKB"/>
</dbReference>
<dbReference type="CDD" id="cd22975">
    <property type="entry name" value="DD_TEX55"/>
    <property type="match status" value="1"/>
</dbReference>
<dbReference type="Gene3D" id="1.20.890.10">
    <property type="entry name" value="cAMP-dependent protein kinase regulatory subunit, dimerization-anchoring domain"/>
    <property type="match status" value="1"/>
</dbReference>
<dbReference type="InterPro" id="IPR040760">
    <property type="entry name" value="Tex55"/>
</dbReference>
<dbReference type="InterPro" id="IPR048377">
    <property type="entry name" value="TEX55_DD"/>
</dbReference>
<dbReference type="PANTHER" id="PTHR47110">
    <property type="entry name" value="TESTIS-SPECIFIC EXPRESSED PROTEIN 55"/>
    <property type="match status" value="1"/>
</dbReference>
<dbReference type="PANTHER" id="PTHR47110:SF1">
    <property type="entry name" value="TESTIS-SPECIFIC EXPRESSED PROTEIN 55"/>
    <property type="match status" value="1"/>
</dbReference>
<dbReference type="Pfam" id="PF17819">
    <property type="entry name" value="Tex55"/>
    <property type="match status" value="1"/>
</dbReference>
<dbReference type="SUPFAM" id="SSF47391">
    <property type="entry name" value="Dimerization-anchoring domain of cAMP-dependent PK regulatory subunit"/>
    <property type="match status" value="1"/>
</dbReference>